<feature type="chain" id="PRO_0000220030" description="Protein-arginine deiminase type-3">
    <location>
        <begin position="1"/>
        <end position="664"/>
    </location>
</feature>
<feature type="sequence conflict" description="In Ref. 1; BAA34182." evidence="4" ref="1">
    <original>A</original>
    <variation>S</variation>
    <location>
        <position position="32"/>
    </location>
</feature>
<feature type="sequence conflict" description="In Ref. 1; BAA34182." evidence="4" ref="1">
    <original>V</original>
    <variation>L</variation>
    <location>
        <position position="52"/>
    </location>
</feature>
<feature type="sequence conflict" description="In Ref. 1; BAA34182." evidence="4" ref="1">
    <original>S</original>
    <variation>N</variation>
    <location>
        <position position="59"/>
    </location>
</feature>
<feature type="sequence conflict" description="In Ref. 1; BAA34182." evidence="4" ref="1">
    <original>I</original>
    <variation>V</variation>
    <location>
        <position position="79"/>
    </location>
</feature>
<feature type="sequence conflict" description="In Ref. 1; BAA34182." evidence="4" ref="1">
    <original>S</original>
    <variation>A</variation>
    <location>
        <position position="225"/>
    </location>
</feature>
<sequence length="664" mass="75073">MSLQRIVRVSLEHPTSAVCVAGVETIVDIYGAVPEGTDMFEVYGTPGVDIYVSPSMERSRERADTRRWCFNKGLEIIVIMNSPSNDLNDSHVQIAYHSSREHLPLAYAVLYLTCVDITLDCDMNCADRQDRSFVDKRQWVWGPDGYGAILLVNCDRDNVDSNAQDNCDQYVRCLQDLEDMSVMVLRTQGPEALFEDHRLILHTSSCDAERARVFHVCGPEDSCESYKCVLGPDRMSYEVPRLKGYEERFFVEGLSFPDAGFPGLISFHVTLLDDSNEDFSETPIFTDTAVFRVAPWIMTPSTLPPLEVYVCRVRNNTCFVEAVEELARKAGCKLTICPQAENRNDRWIQDEMELGYVQAPHKTLPVVFDSPRNGELQGFPYKRILGLDFGYVTREPKDSSVSGLDSFGNLEVSPPVVANGKEYPLGRILIGGNLPGSRGRRVTQVVRNFLHAQKVQPLVELFVDWLAVGHVDEFLSFVPAPDGKGFRLLLASPGACFRLFQEKQKWGHGRSLLFEGVIGDRRVQTVSINQILNNQSLINFNKFAQSCIDWNREVLKRELGLAEGDIIDIPQLFKTEKRKAVAFFPDLVNMLVLGKHLGIPKPFGPIINGRCCLEEKVRSLLEPLGLHCTFIDDFTPYHMLHGEVHCGTNVRREPFAFKWWHMVP</sequence>
<reference key="1">
    <citation type="journal article" date="1999" name="Eur. J. Biochem.">
        <title>Molecular cloning of cDNAs of mouse peptidylarginine deiminase type I, type III and type IV, and the expression pattern of type I in mouse.</title>
        <authorList>
            <person name="Rusd A.A."/>
            <person name="Ikejiri Y."/>
            <person name="Ono H."/>
            <person name="Yonekawa T."/>
            <person name="Shiraiwa M."/>
            <person name="Kawada A."/>
            <person name="Takahara H."/>
        </authorList>
    </citation>
    <scope>NUCLEOTIDE SEQUENCE [MRNA]</scope>
    <source>
        <tissue>Epidermis</tissue>
    </source>
</reference>
<reference key="2">
    <citation type="journal article" date="2009" name="PLoS Biol.">
        <title>Lineage-specific biology revealed by a finished genome assembly of the mouse.</title>
        <authorList>
            <person name="Church D.M."/>
            <person name="Goodstadt L."/>
            <person name="Hillier L.W."/>
            <person name="Zody M.C."/>
            <person name="Goldstein S."/>
            <person name="She X."/>
            <person name="Bult C.J."/>
            <person name="Agarwala R."/>
            <person name="Cherry J.L."/>
            <person name="DiCuccio M."/>
            <person name="Hlavina W."/>
            <person name="Kapustin Y."/>
            <person name="Meric P."/>
            <person name="Maglott D."/>
            <person name="Birtle Z."/>
            <person name="Marques A.C."/>
            <person name="Graves T."/>
            <person name="Zhou S."/>
            <person name="Teague B."/>
            <person name="Potamousis K."/>
            <person name="Churas C."/>
            <person name="Place M."/>
            <person name="Herschleb J."/>
            <person name="Runnheim R."/>
            <person name="Forrest D."/>
            <person name="Amos-Landgraf J."/>
            <person name="Schwartz D.C."/>
            <person name="Cheng Z."/>
            <person name="Lindblad-Toh K."/>
            <person name="Eichler E.E."/>
            <person name="Ponting C.P."/>
        </authorList>
    </citation>
    <scope>NUCLEOTIDE SEQUENCE [LARGE SCALE GENOMIC DNA]</scope>
    <source>
        <strain>C57BL/6J</strain>
    </source>
</reference>
<reference key="3">
    <citation type="journal article" date="1991" name="J. Biochem.">
        <title>Three types of mouse peptidylarginine deiminase: characterization and tissue distribution.</title>
        <authorList>
            <person name="Terakawa H."/>
            <person name="Takahara H."/>
            <person name="Sugawara K."/>
        </authorList>
    </citation>
    <scope>CHARACTERIZATION</scope>
    <scope>TISSUE SPECIFICITY</scope>
</reference>
<reference key="4">
    <citation type="journal article" date="2016" name="Am. J. Hum. Genet.">
        <title>Mutations in three genes encoding proteins involved in hair shaft formation cause uncombable hair syndrome.</title>
        <authorList>
            <person name="Ue Basmanav F.B."/>
            <person name="Cau L."/>
            <person name="Tafazzoli A."/>
            <person name="Mechin M.C."/>
            <person name="Wolf S."/>
            <person name="Romano M.T."/>
            <person name="Valentin F."/>
            <person name="Wiegmann H."/>
            <person name="Huchenq A."/>
            <person name="Kandil R."/>
            <person name="Garcia Bartels N."/>
            <person name="Kilic A."/>
            <person name="George S."/>
            <person name="Ralser D.J."/>
            <person name="Bergner S."/>
            <person name="Ferguson D.J."/>
            <person name="Oprisoreanu A.M."/>
            <person name="Wehner M."/>
            <person name="Thiele H."/>
            <person name="Altmueller J."/>
            <person name="Nuernberg P."/>
            <person name="Swan D."/>
            <person name="Houniet D."/>
            <person name="Buechner A."/>
            <person name="Weibel L."/>
            <person name="Wagner N."/>
            <person name="Grimalt R."/>
            <person name="Bygum A."/>
            <person name="Serre G."/>
            <person name="Blume-Peytavi U."/>
            <person name="Sprecher E."/>
            <person name="Schoch S."/>
            <person name="Oji V."/>
            <person name="Hamm H."/>
            <person name="Farrant P."/>
            <person name="Simon M."/>
            <person name="Betz R.C."/>
        </authorList>
    </citation>
    <scope>DISRUPTION PHENOTYPE</scope>
</reference>
<protein>
    <recommendedName>
        <fullName>Protein-arginine deiminase type-3</fullName>
        <ecNumber evidence="1">3.5.3.15</ecNumber>
    </recommendedName>
    <alternativeName>
        <fullName>Peptidylarginine deiminase III</fullName>
    </alternativeName>
    <alternativeName>
        <fullName>Protein-arginine deiminase type III</fullName>
    </alternativeName>
</protein>
<name>PADI3_MOUSE</name>
<keyword id="KW-0106">Calcium</keyword>
<keyword id="KW-0963">Cytoplasm</keyword>
<keyword id="KW-0378">Hydrolase</keyword>
<keyword id="KW-1185">Reference proteome</keyword>
<accession>Q9Z184</accession>
<accession>A2AMU4</accession>
<dbReference type="EC" id="3.5.3.15" evidence="1"/>
<dbReference type="EMBL" id="AB013849">
    <property type="protein sequence ID" value="BAA34182.1"/>
    <property type="molecule type" value="mRNA"/>
</dbReference>
<dbReference type="EMBL" id="AL807805">
    <property type="status" value="NOT_ANNOTATED_CDS"/>
    <property type="molecule type" value="Genomic_DNA"/>
</dbReference>
<dbReference type="CCDS" id="CCDS18855.1"/>
<dbReference type="RefSeq" id="NP_035190.3">
    <property type="nucleotide sequence ID" value="NM_011060.4"/>
</dbReference>
<dbReference type="SMR" id="Q9Z184"/>
<dbReference type="FunCoup" id="Q9Z184">
    <property type="interactions" value="297"/>
</dbReference>
<dbReference type="STRING" id="10090.ENSMUSP00000026377"/>
<dbReference type="iPTMnet" id="Q9Z184"/>
<dbReference type="PhosphoSitePlus" id="Q9Z184"/>
<dbReference type="PaxDb" id="10090-ENSMUSP00000026377"/>
<dbReference type="ProteomicsDB" id="287935"/>
<dbReference type="Antibodypedia" id="29341">
    <property type="antibodies" value="94 antibodies from 18 providers"/>
</dbReference>
<dbReference type="DNASU" id="18601"/>
<dbReference type="Ensembl" id="ENSMUST00000026377.9">
    <property type="protein sequence ID" value="ENSMUSP00000026377.3"/>
    <property type="gene ID" value="ENSMUSG00000025328.10"/>
</dbReference>
<dbReference type="GeneID" id="18601"/>
<dbReference type="KEGG" id="mmu:18601"/>
<dbReference type="UCSC" id="uc008vng.1">
    <property type="organism name" value="mouse"/>
</dbReference>
<dbReference type="AGR" id="MGI:1338891"/>
<dbReference type="CTD" id="51702"/>
<dbReference type="MGI" id="MGI:1338891">
    <property type="gene designation" value="Padi3"/>
</dbReference>
<dbReference type="VEuPathDB" id="HostDB:ENSMUSG00000025328"/>
<dbReference type="eggNOG" id="ENOG502QVJA">
    <property type="taxonomic scope" value="Eukaryota"/>
</dbReference>
<dbReference type="GeneTree" id="ENSGT00940000153217"/>
<dbReference type="HOGENOM" id="CLU_021911_0_0_1"/>
<dbReference type="InParanoid" id="Q9Z184"/>
<dbReference type="OMA" id="QKCGHGR"/>
<dbReference type="OrthoDB" id="15386at9989"/>
<dbReference type="PhylomeDB" id="Q9Z184"/>
<dbReference type="TreeFam" id="TF331952"/>
<dbReference type="Reactome" id="R-MMU-3247509">
    <property type="pathway name" value="Chromatin modifying enzymes"/>
</dbReference>
<dbReference type="BioGRID-ORCS" id="18601">
    <property type="hits" value="0 hits in 81 CRISPR screens"/>
</dbReference>
<dbReference type="PRO" id="PR:Q9Z184"/>
<dbReference type="Proteomes" id="UP000000589">
    <property type="component" value="Chromosome 4"/>
</dbReference>
<dbReference type="RNAct" id="Q9Z184">
    <property type="molecule type" value="protein"/>
</dbReference>
<dbReference type="Bgee" id="ENSMUSG00000025328">
    <property type="expression patterns" value="Expressed in lip and 33 other cell types or tissues"/>
</dbReference>
<dbReference type="ExpressionAtlas" id="Q9Z184">
    <property type="expression patterns" value="baseline and differential"/>
</dbReference>
<dbReference type="GO" id="GO:0005737">
    <property type="term" value="C:cytoplasm"/>
    <property type="evidence" value="ECO:0000250"/>
    <property type="project" value="UniProtKB"/>
</dbReference>
<dbReference type="GO" id="GO:0005829">
    <property type="term" value="C:cytosol"/>
    <property type="evidence" value="ECO:0007669"/>
    <property type="project" value="Ensembl"/>
</dbReference>
<dbReference type="GO" id="GO:0005654">
    <property type="term" value="C:nucleoplasm"/>
    <property type="evidence" value="ECO:0007669"/>
    <property type="project" value="Ensembl"/>
</dbReference>
<dbReference type="GO" id="GO:0005509">
    <property type="term" value="F:calcium ion binding"/>
    <property type="evidence" value="ECO:0007669"/>
    <property type="project" value="InterPro"/>
</dbReference>
<dbReference type="GO" id="GO:0042802">
    <property type="term" value="F:identical protein binding"/>
    <property type="evidence" value="ECO:0007669"/>
    <property type="project" value="Ensembl"/>
</dbReference>
<dbReference type="GO" id="GO:0004668">
    <property type="term" value="F:protein-arginine deiminase activity"/>
    <property type="evidence" value="ECO:0000250"/>
    <property type="project" value="UniProtKB"/>
</dbReference>
<dbReference type="CDD" id="cd04214">
    <property type="entry name" value="PAD_N"/>
    <property type="match status" value="1"/>
</dbReference>
<dbReference type="FunFam" id="2.60.40.1860:FF:000002">
    <property type="entry name" value="Peptidyl arginine deiminase 3"/>
    <property type="match status" value="1"/>
</dbReference>
<dbReference type="FunFam" id="2.60.40.1700:FF:000001">
    <property type="entry name" value="Protein-arginine deiminase type-2"/>
    <property type="match status" value="1"/>
</dbReference>
<dbReference type="FunFam" id="3.75.10.10:FF:000003">
    <property type="entry name" value="Protein-arginine deiminase type-2"/>
    <property type="match status" value="1"/>
</dbReference>
<dbReference type="Gene3D" id="3.75.10.10">
    <property type="entry name" value="L-arginine/glycine Amidinotransferase, Chain A"/>
    <property type="match status" value="1"/>
</dbReference>
<dbReference type="Gene3D" id="2.60.40.1700">
    <property type="entry name" value="Protein-arginine deiminase, central domain"/>
    <property type="match status" value="1"/>
</dbReference>
<dbReference type="Gene3D" id="2.60.40.1860">
    <property type="entry name" value="Protein-arginine deiminase, N-terminal domain"/>
    <property type="match status" value="1"/>
</dbReference>
<dbReference type="InterPro" id="IPR008972">
    <property type="entry name" value="Cupredoxin"/>
</dbReference>
<dbReference type="InterPro" id="IPR004303">
    <property type="entry name" value="PAD"/>
</dbReference>
<dbReference type="InterPro" id="IPR013530">
    <property type="entry name" value="PAD_C"/>
</dbReference>
<dbReference type="InterPro" id="IPR036556">
    <property type="entry name" value="PAD_central_sf"/>
</dbReference>
<dbReference type="InterPro" id="IPR013732">
    <property type="entry name" value="PAD_N"/>
</dbReference>
<dbReference type="InterPro" id="IPR038685">
    <property type="entry name" value="PAD_N_sf"/>
</dbReference>
<dbReference type="InterPro" id="IPR013733">
    <property type="entry name" value="Prot_Arg_deaminase_cen_dom"/>
</dbReference>
<dbReference type="PANTHER" id="PTHR10837">
    <property type="entry name" value="PEPTIDYLARGININE DEIMINASE"/>
    <property type="match status" value="1"/>
</dbReference>
<dbReference type="PANTHER" id="PTHR10837:SF21">
    <property type="entry name" value="PROTEIN-ARGININE DEIMINASE TYPE-3"/>
    <property type="match status" value="1"/>
</dbReference>
<dbReference type="Pfam" id="PF03068">
    <property type="entry name" value="PAD"/>
    <property type="match status" value="1"/>
</dbReference>
<dbReference type="Pfam" id="PF08527">
    <property type="entry name" value="PAD_M"/>
    <property type="match status" value="1"/>
</dbReference>
<dbReference type="Pfam" id="PF08526">
    <property type="entry name" value="PAD_N"/>
    <property type="match status" value="1"/>
</dbReference>
<dbReference type="PIRSF" id="PIRSF001247">
    <property type="entry name" value="Protein-arginine_deiminase"/>
    <property type="match status" value="1"/>
</dbReference>
<dbReference type="SUPFAM" id="SSF49503">
    <property type="entry name" value="Cupredoxins"/>
    <property type="match status" value="1"/>
</dbReference>
<dbReference type="SUPFAM" id="SSF55909">
    <property type="entry name" value="Pentein"/>
    <property type="match status" value="1"/>
</dbReference>
<dbReference type="SUPFAM" id="SSF110083">
    <property type="entry name" value="Peptidylarginine deiminase Pad4, middle domain"/>
    <property type="match status" value="1"/>
</dbReference>
<proteinExistence type="evidence at protein level"/>
<gene>
    <name type="primary">Padi3</name>
    <name type="synonym">Pad3</name>
    <name type="synonym">Pdi3</name>
</gene>
<comment type="function">
    <text evidence="1">Catalyzes the deimination of arginine residues of proteins.</text>
</comment>
<comment type="catalytic activity">
    <reaction evidence="1">
        <text>L-arginyl-[protein] + H2O = L-citrullyl-[protein] + NH4(+)</text>
        <dbReference type="Rhea" id="RHEA:18089"/>
        <dbReference type="Rhea" id="RHEA-COMP:10532"/>
        <dbReference type="Rhea" id="RHEA-COMP:10588"/>
        <dbReference type="ChEBI" id="CHEBI:15377"/>
        <dbReference type="ChEBI" id="CHEBI:28938"/>
        <dbReference type="ChEBI" id="CHEBI:29965"/>
        <dbReference type="ChEBI" id="CHEBI:83397"/>
        <dbReference type="EC" id="3.5.3.15"/>
    </reaction>
</comment>
<comment type="cofactor">
    <cofactor>
        <name>Ca(2+)</name>
        <dbReference type="ChEBI" id="CHEBI:29108"/>
    </cofactor>
</comment>
<comment type="subcellular location">
    <subcellularLocation>
        <location evidence="1">Cytoplasm</location>
    </subcellularLocation>
</comment>
<comment type="tissue specificity">
    <text evidence="2">Epidermis and hair follicles.</text>
</comment>
<comment type="disruption phenotype">
    <text evidence="3">No visible phenotype. The skin of 7-week-old null mice appeared normal, but scanning electron microscopy revealed structural alterations in the whiskers and hair coat morphology (PubMed:27866708).</text>
</comment>
<comment type="similarity">
    <text evidence="4">Belongs to the protein arginine deiminase family.</text>
</comment>
<organism>
    <name type="scientific">Mus musculus</name>
    <name type="common">Mouse</name>
    <dbReference type="NCBI Taxonomy" id="10090"/>
    <lineage>
        <taxon>Eukaryota</taxon>
        <taxon>Metazoa</taxon>
        <taxon>Chordata</taxon>
        <taxon>Craniata</taxon>
        <taxon>Vertebrata</taxon>
        <taxon>Euteleostomi</taxon>
        <taxon>Mammalia</taxon>
        <taxon>Eutheria</taxon>
        <taxon>Euarchontoglires</taxon>
        <taxon>Glires</taxon>
        <taxon>Rodentia</taxon>
        <taxon>Myomorpha</taxon>
        <taxon>Muroidea</taxon>
        <taxon>Muridae</taxon>
        <taxon>Murinae</taxon>
        <taxon>Mus</taxon>
        <taxon>Mus</taxon>
    </lineage>
</organism>
<evidence type="ECO:0000250" key="1">
    <source>
        <dbReference type="UniProtKB" id="Q9ULW8"/>
    </source>
</evidence>
<evidence type="ECO:0000269" key="2">
    <source>
    </source>
</evidence>
<evidence type="ECO:0000269" key="3">
    <source>
    </source>
</evidence>
<evidence type="ECO:0000305" key="4"/>